<comment type="function">
    <text evidence="1">A key translational regulator that binds mRNA to regulate translation initiation and/or mRNA stability. Mediates global changes in gene expression, shifting from rapid growth to stress survival by linking envelope stress, the stringent response and the catabolite repression systems. Usually binds in the 5'-UTR; binding at or near the Shine-Dalgarno sequence prevents ribosome-binding, repressing translation, binding elsewhere in the 5'-UTR can activate translation and/or stabilize the mRNA. Its function is antagonized by small RNA(s).</text>
</comment>
<comment type="subunit">
    <text evidence="1">Homodimer; the beta-strands of each monomer intercalate to form a hydrophobic core, while the alpha-helices form wings that extend away from the core.</text>
</comment>
<comment type="subcellular location">
    <subcellularLocation>
        <location evidence="1">Cytoplasm</location>
    </subcellularLocation>
</comment>
<comment type="similarity">
    <text evidence="1">Belongs to the CsrA/RsmA family.</text>
</comment>
<protein>
    <recommendedName>
        <fullName evidence="1">Translational regulator CsrA</fullName>
    </recommendedName>
    <alternativeName>
        <fullName evidence="1">Carbon storage regulator</fullName>
    </alternativeName>
</protein>
<reference key="1">
    <citation type="journal article" date="2001" name="Nature">
        <title>Complete genome sequence of a multiple drug resistant Salmonella enterica serovar Typhi CT18.</title>
        <authorList>
            <person name="Parkhill J."/>
            <person name="Dougan G."/>
            <person name="James K.D."/>
            <person name="Thomson N.R."/>
            <person name="Pickard D."/>
            <person name="Wain J."/>
            <person name="Churcher C.M."/>
            <person name="Mungall K.L."/>
            <person name="Bentley S.D."/>
            <person name="Holden M.T.G."/>
            <person name="Sebaihia M."/>
            <person name="Baker S."/>
            <person name="Basham D."/>
            <person name="Brooks K."/>
            <person name="Chillingworth T."/>
            <person name="Connerton P."/>
            <person name="Cronin A."/>
            <person name="Davis P."/>
            <person name="Davies R.M."/>
            <person name="Dowd L."/>
            <person name="White N."/>
            <person name="Farrar J."/>
            <person name="Feltwell T."/>
            <person name="Hamlin N."/>
            <person name="Haque A."/>
            <person name="Hien T.T."/>
            <person name="Holroyd S."/>
            <person name="Jagels K."/>
            <person name="Krogh A."/>
            <person name="Larsen T.S."/>
            <person name="Leather S."/>
            <person name="Moule S."/>
            <person name="O'Gaora P."/>
            <person name="Parry C."/>
            <person name="Quail M.A."/>
            <person name="Rutherford K.M."/>
            <person name="Simmonds M."/>
            <person name="Skelton J."/>
            <person name="Stevens K."/>
            <person name="Whitehead S."/>
            <person name="Barrell B.G."/>
        </authorList>
    </citation>
    <scope>NUCLEOTIDE SEQUENCE [LARGE SCALE GENOMIC DNA]</scope>
    <source>
        <strain>CT18</strain>
    </source>
</reference>
<reference key="2">
    <citation type="journal article" date="2003" name="J. Bacteriol.">
        <title>Comparative genomics of Salmonella enterica serovar Typhi strains Ty2 and CT18.</title>
        <authorList>
            <person name="Deng W."/>
            <person name="Liou S.-R."/>
            <person name="Plunkett G. III"/>
            <person name="Mayhew G.F."/>
            <person name="Rose D.J."/>
            <person name="Burland V."/>
            <person name="Kodoyianni V."/>
            <person name="Schwartz D.C."/>
            <person name="Blattner F.R."/>
        </authorList>
    </citation>
    <scope>NUCLEOTIDE SEQUENCE [LARGE SCALE GENOMIC DNA]</scope>
    <source>
        <strain>ATCC 700931 / Ty2</strain>
    </source>
</reference>
<organism>
    <name type="scientific">Salmonella typhi</name>
    <dbReference type="NCBI Taxonomy" id="90370"/>
    <lineage>
        <taxon>Bacteria</taxon>
        <taxon>Pseudomonadati</taxon>
        <taxon>Pseudomonadota</taxon>
        <taxon>Gammaproteobacteria</taxon>
        <taxon>Enterobacterales</taxon>
        <taxon>Enterobacteriaceae</taxon>
        <taxon>Salmonella</taxon>
    </lineage>
</organism>
<name>CSRA_SALTI</name>
<keyword id="KW-0010">Activator</keyword>
<keyword id="KW-0963">Cytoplasm</keyword>
<keyword id="KW-0678">Repressor</keyword>
<keyword id="KW-0694">RNA-binding</keyword>
<keyword id="KW-0810">Translation regulation</keyword>
<sequence>MLILTRRVGETLMIGDEVTVTVLGVKGNQVRIGVNAPKEVSVHREEIYQRIQAEKSQQSSY</sequence>
<dbReference type="EMBL" id="AL513382">
    <property type="protein sequence ID" value="CAD05932.1"/>
    <property type="molecule type" value="Genomic_DNA"/>
</dbReference>
<dbReference type="EMBL" id="AE014613">
    <property type="protein sequence ID" value="AAO70288.1"/>
    <property type="molecule type" value="Genomic_DNA"/>
</dbReference>
<dbReference type="RefSeq" id="NP_457219.1">
    <property type="nucleotide sequence ID" value="NC_003198.1"/>
</dbReference>
<dbReference type="RefSeq" id="WP_000906486.1">
    <property type="nucleotide sequence ID" value="NZ_WSUR01000005.1"/>
</dbReference>
<dbReference type="SMR" id="P69916"/>
<dbReference type="STRING" id="220341.gene:17586842"/>
<dbReference type="GeneID" id="98389839"/>
<dbReference type="KEGG" id="stt:t2727"/>
<dbReference type="KEGG" id="sty:STY2947"/>
<dbReference type="PATRIC" id="fig|220341.7.peg.3002"/>
<dbReference type="eggNOG" id="COG1551">
    <property type="taxonomic scope" value="Bacteria"/>
</dbReference>
<dbReference type="HOGENOM" id="CLU_164837_2_1_6"/>
<dbReference type="OMA" id="VYRKEVY"/>
<dbReference type="OrthoDB" id="9809061at2"/>
<dbReference type="Proteomes" id="UP000000541">
    <property type="component" value="Chromosome"/>
</dbReference>
<dbReference type="Proteomes" id="UP000002670">
    <property type="component" value="Chromosome"/>
</dbReference>
<dbReference type="GO" id="GO:0005829">
    <property type="term" value="C:cytosol"/>
    <property type="evidence" value="ECO:0007669"/>
    <property type="project" value="TreeGrafter"/>
</dbReference>
<dbReference type="GO" id="GO:0048027">
    <property type="term" value="F:mRNA 5'-UTR binding"/>
    <property type="evidence" value="ECO:0007669"/>
    <property type="project" value="UniProtKB-UniRule"/>
</dbReference>
<dbReference type="GO" id="GO:0006402">
    <property type="term" value="P:mRNA catabolic process"/>
    <property type="evidence" value="ECO:0007669"/>
    <property type="project" value="InterPro"/>
</dbReference>
<dbReference type="GO" id="GO:0045947">
    <property type="term" value="P:negative regulation of translational initiation"/>
    <property type="evidence" value="ECO:0007669"/>
    <property type="project" value="UniProtKB-UniRule"/>
</dbReference>
<dbReference type="GO" id="GO:0045948">
    <property type="term" value="P:positive regulation of translational initiation"/>
    <property type="evidence" value="ECO:0007669"/>
    <property type="project" value="UniProtKB-UniRule"/>
</dbReference>
<dbReference type="GO" id="GO:0006109">
    <property type="term" value="P:regulation of carbohydrate metabolic process"/>
    <property type="evidence" value="ECO:0007669"/>
    <property type="project" value="UniProtKB-UniRule"/>
</dbReference>
<dbReference type="FunFam" id="2.60.40.4380:FF:000001">
    <property type="entry name" value="Translational regulator CsrA"/>
    <property type="match status" value="1"/>
</dbReference>
<dbReference type="Gene3D" id="2.60.40.4380">
    <property type="entry name" value="Translational regulator CsrA"/>
    <property type="match status" value="1"/>
</dbReference>
<dbReference type="HAMAP" id="MF_00167">
    <property type="entry name" value="CsrA"/>
    <property type="match status" value="1"/>
</dbReference>
<dbReference type="InterPro" id="IPR003751">
    <property type="entry name" value="CsrA"/>
</dbReference>
<dbReference type="InterPro" id="IPR036107">
    <property type="entry name" value="CsrA_sf"/>
</dbReference>
<dbReference type="NCBIfam" id="TIGR00202">
    <property type="entry name" value="csrA"/>
    <property type="match status" value="1"/>
</dbReference>
<dbReference type="NCBIfam" id="NF002469">
    <property type="entry name" value="PRK01712.1"/>
    <property type="match status" value="1"/>
</dbReference>
<dbReference type="PANTHER" id="PTHR34984">
    <property type="entry name" value="CARBON STORAGE REGULATOR"/>
    <property type="match status" value="1"/>
</dbReference>
<dbReference type="PANTHER" id="PTHR34984:SF1">
    <property type="entry name" value="CARBON STORAGE REGULATOR"/>
    <property type="match status" value="1"/>
</dbReference>
<dbReference type="Pfam" id="PF02599">
    <property type="entry name" value="CsrA"/>
    <property type="match status" value="1"/>
</dbReference>
<dbReference type="SUPFAM" id="SSF117130">
    <property type="entry name" value="CsrA-like"/>
    <property type="match status" value="1"/>
</dbReference>
<proteinExistence type="inferred from homology"/>
<feature type="chain" id="PRO_0000177087" description="Translational regulator CsrA">
    <location>
        <begin position="1"/>
        <end position="61"/>
    </location>
</feature>
<gene>
    <name evidence="1" type="primary">csrA</name>
    <name type="synonym">zfiA</name>
    <name type="ordered locus">STY2947</name>
    <name type="ordered locus">t2727</name>
</gene>
<accession>P69916</accession>
<accession>P31803</accession>
<evidence type="ECO:0000255" key="1">
    <source>
        <dbReference type="HAMAP-Rule" id="MF_00167"/>
    </source>
</evidence>